<comment type="function">
    <text>Central component of the condensin complex, a complex required for conversion of interphase chromatin into mitotic-like condense chromosomes. The condensin complex probably introduces positive supercoils into relaxed DNA in the presence of type I topoisomerases and converts nicked DNA into positive knotted forms in the presence of type II topoisomerases.</text>
</comment>
<comment type="subunit">
    <text evidence="3">Forms a heterodimer with cut3/smc4. Component of the condensin complex, which contains the cut3 and cut14 heterodimer, and three non smc subunits that probably regulate the complex: cnd1, cnd2 and cnd3.</text>
</comment>
<comment type="interaction">
    <interactant intactId="EBI-1149523">
        <id>P41003</id>
    </interactant>
    <interactant intactId="EBI-1149474">
        <id>P41004</id>
        <label>cut3</label>
    </interactant>
    <organismsDiffer>false</organismsDiffer>
    <experiments>5</experiments>
</comment>
<comment type="subcellular location">
    <subcellularLocation>
        <location>Nucleus</location>
    </subcellularLocation>
    <subcellularLocation>
        <location>Cytoplasm</location>
    </subcellularLocation>
    <subcellularLocation>
        <location>Chromosome</location>
    </subcellularLocation>
    <text>In interphase cells, the majority of the condensin complex is found in the cytoplasm, while a minority of the complex is associated with chromatin. A subpopulation of the complex however remains associated with chromosome foci in interphase cells. During mitosis, most of the condensin complex is associated with the chromatin. At the onset of prophase, condensin associates with chromosome arms and to chromosome condensation. Dissociation from chromosomes is observed in late telophase.</text>
</comment>
<comment type="domain">
    <text evidence="1">The flexible SMC hinge domain, which separates the large intramolecular coiled coil regions, allows the heterodimerization with cut3, forming a V-shaped heterodimer.</text>
</comment>
<comment type="similarity">
    <text evidence="4">Belongs to the SMC family. SMC2 subfamily.</text>
</comment>
<evidence type="ECO:0000250" key="1"/>
<evidence type="ECO:0000255" key="2"/>
<evidence type="ECO:0000269" key="3">
    <source>
    </source>
</evidence>
<evidence type="ECO:0000305" key="4"/>
<proteinExistence type="evidence at protein level"/>
<accession>P41003</accession>
<accession>Q9P7E2</accession>
<organism>
    <name type="scientific">Schizosaccharomyces pombe (strain 972 / ATCC 24843)</name>
    <name type="common">Fission yeast</name>
    <dbReference type="NCBI Taxonomy" id="284812"/>
    <lineage>
        <taxon>Eukaryota</taxon>
        <taxon>Fungi</taxon>
        <taxon>Dikarya</taxon>
        <taxon>Ascomycota</taxon>
        <taxon>Taphrinomycotina</taxon>
        <taxon>Schizosaccharomycetes</taxon>
        <taxon>Schizosaccharomycetales</taxon>
        <taxon>Schizosaccharomycetaceae</taxon>
        <taxon>Schizosaccharomyces</taxon>
    </lineage>
</organism>
<keyword id="KW-0067">ATP-binding</keyword>
<keyword id="KW-0131">Cell cycle</keyword>
<keyword id="KW-0132">Cell division</keyword>
<keyword id="KW-0158">Chromosome</keyword>
<keyword id="KW-0175">Coiled coil</keyword>
<keyword id="KW-0963">Cytoplasm</keyword>
<keyword id="KW-0226">DNA condensation</keyword>
<keyword id="KW-0498">Mitosis</keyword>
<keyword id="KW-0547">Nucleotide-binding</keyword>
<keyword id="KW-0539">Nucleus</keyword>
<keyword id="KW-1185">Reference proteome</keyword>
<gene>
    <name type="primary">cut14</name>
    <name type="synonym">smc2</name>
    <name type="ORF">SPBP4H10.06c</name>
</gene>
<name>SMC2_SCHPO</name>
<dbReference type="EMBL" id="D30787">
    <property type="protein sequence ID" value="BAA06453.2"/>
    <property type="molecule type" value="Genomic_DNA"/>
</dbReference>
<dbReference type="EMBL" id="CU329671">
    <property type="protein sequence ID" value="CAB83164.1"/>
    <property type="molecule type" value="Genomic_DNA"/>
</dbReference>
<dbReference type="PIR" id="S51623">
    <property type="entry name" value="S51623"/>
</dbReference>
<dbReference type="RefSeq" id="NP_596180.1">
    <property type="nucleotide sequence ID" value="NM_001022099.2"/>
</dbReference>
<dbReference type="SMR" id="P41003"/>
<dbReference type="BioGRID" id="277831">
    <property type="interactions" value="69"/>
</dbReference>
<dbReference type="FunCoup" id="P41003">
    <property type="interactions" value="850"/>
</dbReference>
<dbReference type="IntAct" id="P41003">
    <property type="interactions" value="2"/>
</dbReference>
<dbReference type="STRING" id="284812.P41003"/>
<dbReference type="iPTMnet" id="P41003"/>
<dbReference type="PaxDb" id="4896-SPBP4H10.06c.1"/>
<dbReference type="EnsemblFungi" id="SPBP4H10.06c.1">
    <property type="protein sequence ID" value="SPBP4H10.06c.1:pep"/>
    <property type="gene ID" value="SPBP4H10.06c"/>
</dbReference>
<dbReference type="GeneID" id="2541319"/>
<dbReference type="KEGG" id="spo:2541319"/>
<dbReference type="PomBase" id="SPBP4H10.06c">
    <property type="gene designation" value="cut14"/>
</dbReference>
<dbReference type="VEuPathDB" id="FungiDB:SPBP4H10.06c"/>
<dbReference type="eggNOG" id="KOG0933">
    <property type="taxonomic scope" value="Eukaryota"/>
</dbReference>
<dbReference type="HOGENOM" id="CLU_001042_9_0_1"/>
<dbReference type="InParanoid" id="P41003"/>
<dbReference type="OMA" id="THNKIAM"/>
<dbReference type="PhylomeDB" id="P41003"/>
<dbReference type="Reactome" id="R-SPO-2514853">
    <property type="pathway name" value="Condensation of Prometaphase Chromosomes"/>
</dbReference>
<dbReference type="PRO" id="PR:P41003"/>
<dbReference type="Proteomes" id="UP000002485">
    <property type="component" value="Chromosome II"/>
</dbReference>
<dbReference type="GO" id="GO:0000785">
    <property type="term" value="C:chromatin"/>
    <property type="evidence" value="ECO:0000314"/>
    <property type="project" value="PomBase"/>
</dbReference>
<dbReference type="GO" id="GO:0034506">
    <property type="term" value="C:chromosome, centromeric core domain"/>
    <property type="evidence" value="ECO:0000314"/>
    <property type="project" value="PomBase"/>
</dbReference>
<dbReference type="GO" id="GO:0000793">
    <property type="term" value="C:condensed chromosome"/>
    <property type="evidence" value="ECO:0000318"/>
    <property type="project" value="GO_Central"/>
</dbReference>
<dbReference type="GO" id="GO:0000796">
    <property type="term" value="C:condensin complex"/>
    <property type="evidence" value="ECO:0000314"/>
    <property type="project" value="PomBase"/>
</dbReference>
<dbReference type="GO" id="GO:0005737">
    <property type="term" value="C:cytoplasm"/>
    <property type="evidence" value="ECO:0000314"/>
    <property type="project" value="PomBase"/>
</dbReference>
<dbReference type="GO" id="GO:0000791">
    <property type="term" value="C:euchromatin"/>
    <property type="evidence" value="ECO:0000314"/>
    <property type="project" value="PomBase"/>
</dbReference>
<dbReference type="GO" id="GO:0000776">
    <property type="term" value="C:kinetochore"/>
    <property type="evidence" value="ECO:0000314"/>
    <property type="project" value="PomBase"/>
</dbReference>
<dbReference type="GO" id="GO:0005730">
    <property type="term" value="C:nucleolus"/>
    <property type="evidence" value="ECO:0000314"/>
    <property type="project" value="PomBase"/>
</dbReference>
<dbReference type="GO" id="GO:0005634">
    <property type="term" value="C:nucleus"/>
    <property type="evidence" value="ECO:0000314"/>
    <property type="project" value="PomBase"/>
</dbReference>
<dbReference type="GO" id="GO:0005524">
    <property type="term" value="F:ATP binding"/>
    <property type="evidence" value="ECO:0007669"/>
    <property type="project" value="UniProtKB-KW"/>
</dbReference>
<dbReference type="GO" id="GO:0016887">
    <property type="term" value="F:ATP hydrolysis activity"/>
    <property type="evidence" value="ECO:0007669"/>
    <property type="project" value="InterPro"/>
</dbReference>
<dbReference type="GO" id="GO:0003682">
    <property type="term" value="F:chromatin binding"/>
    <property type="evidence" value="ECO:0000318"/>
    <property type="project" value="GO_Central"/>
</dbReference>
<dbReference type="GO" id="GO:0015616">
    <property type="term" value="F:DNA translocase activity"/>
    <property type="evidence" value="ECO:0000304"/>
    <property type="project" value="PomBase"/>
</dbReference>
<dbReference type="GO" id="GO:0051301">
    <property type="term" value="P:cell division"/>
    <property type="evidence" value="ECO:0007669"/>
    <property type="project" value="UniProtKB-KW"/>
</dbReference>
<dbReference type="GO" id="GO:0006325">
    <property type="term" value="P:chromatin organization"/>
    <property type="evidence" value="ECO:0000315"/>
    <property type="project" value="PomBase"/>
</dbReference>
<dbReference type="GO" id="GO:0007076">
    <property type="term" value="P:mitotic chromosome condensation"/>
    <property type="evidence" value="ECO:0000314"/>
    <property type="project" value="PomBase"/>
</dbReference>
<dbReference type="CDD" id="cd03273">
    <property type="entry name" value="ABC_SMC2_euk"/>
    <property type="match status" value="1"/>
</dbReference>
<dbReference type="FunFam" id="1.20.1060.20:FF:000005">
    <property type="entry name" value="Structural maintenance of chromosomes 2"/>
    <property type="match status" value="1"/>
</dbReference>
<dbReference type="FunFam" id="3.40.50.300:FF:000278">
    <property type="entry name" value="Structural maintenance of chromosomes 2"/>
    <property type="match status" value="1"/>
</dbReference>
<dbReference type="FunFam" id="3.40.50.300:FF:000385">
    <property type="entry name" value="Structural maintenance of chromosomes 2"/>
    <property type="match status" value="1"/>
</dbReference>
<dbReference type="Gene3D" id="1.10.287.1490">
    <property type="match status" value="1"/>
</dbReference>
<dbReference type="Gene3D" id="1.20.1060.20">
    <property type="match status" value="1"/>
</dbReference>
<dbReference type="Gene3D" id="3.30.70.1620">
    <property type="match status" value="1"/>
</dbReference>
<dbReference type="Gene3D" id="3.40.50.300">
    <property type="entry name" value="P-loop containing nucleotide triphosphate hydrolases"/>
    <property type="match status" value="2"/>
</dbReference>
<dbReference type="InterPro" id="IPR027417">
    <property type="entry name" value="P-loop_NTPase"/>
</dbReference>
<dbReference type="InterPro" id="IPR003395">
    <property type="entry name" value="RecF/RecN/SMC_N"/>
</dbReference>
<dbReference type="InterPro" id="IPR024704">
    <property type="entry name" value="SMC"/>
</dbReference>
<dbReference type="InterPro" id="IPR027120">
    <property type="entry name" value="Smc2_ABC"/>
</dbReference>
<dbReference type="InterPro" id="IPR010935">
    <property type="entry name" value="SMC_hinge"/>
</dbReference>
<dbReference type="InterPro" id="IPR036277">
    <property type="entry name" value="SMC_hinge_sf"/>
</dbReference>
<dbReference type="PANTHER" id="PTHR43977">
    <property type="entry name" value="STRUCTURAL MAINTENANCE OF CHROMOSOMES PROTEIN 3"/>
    <property type="match status" value="1"/>
</dbReference>
<dbReference type="Pfam" id="PF06470">
    <property type="entry name" value="SMC_hinge"/>
    <property type="match status" value="1"/>
</dbReference>
<dbReference type="Pfam" id="PF02463">
    <property type="entry name" value="SMC_N"/>
    <property type="match status" value="1"/>
</dbReference>
<dbReference type="PIRSF" id="PIRSF005719">
    <property type="entry name" value="SMC"/>
    <property type="match status" value="1"/>
</dbReference>
<dbReference type="SMART" id="SM00968">
    <property type="entry name" value="SMC_hinge"/>
    <property type="match status" value="1"/>
</dbReference>
<dbReference type="SUPFAM" id="SSF52540">
    <property type="entry name" value="P-loop containing nucleoside triphosphate hydrolases"/>
    <property type="match status" value="1"/>
</dbReference>
<dbReference type="SUPFAM" id="SSF75553">
    <property type="entry name" value="Smc hinge domain"/>
    <property type="match status" value="1"/>
</dbReference>
<reference key="1">
    <citation type="journal article" date="1994" name="EMBO J.">
        <title>Fission yeast cut3 and cut14, members of a ubiquitous protein family, are required for chromosome condensation and segregation in mitosis.</title>
        <authorList>
            <person name="Saka Y."/>
            <person name="Sutani T."/>
            <person name="Yamashita Y."/>
            <person name="Saitoh S."/>
            <person name="Takeuchi M."/>
            <person name="Nakaseko Y."/>
            <person name="Yanagida M."/>
        </authorList>
    </citation>
    <scope>NUCLEOTIDE SEQUENCE [GENOMIC DNA]</scope>
</reference>
<reference key="2">
    <citation type="submission" date="1999-10" db="EMBL/GenBank/DDBJ databases">
        <authorList>
            <person name="Saka Y."/>
            <person name="Sutani T."/>
            <person name="Yamashita Y."/>
            <person name="Saitoh S."/>
            <person name="Takeuchi M."/>
            <person name="Nakaseko Y."/>
            <person name="Yanagida M."/>
        </authorList>
    </citation>
    <scope>SEQUENCE REVISION</scope>
</reference>
<reference key="3">
    <citation type="journal article" date="2002" name="Nature">
        <title>The genome sequence of Schizosaccharomyces pombe.</title>
        <authorList>
            <person name="Wood V."/>
            <person name="Gwilliam R."/>
            <person name="Rajandream M.A."/>
            <person name="Lyne M.H."/>
            <person name="Lyne R."/>
            <person name="Stewart A."/>
            <person name="Sgouros J.G."/>
            <person name="Peat N."/>
            <person name="Hayles J."/>
            <person name="Baker S.G."/>
            <person name="Basham D."/>
            <person name="Bowman S."/>
            <person name="Brooks K."/>
            <person name="Brown D."/>
            <person name="Brown S."/>
            <person name="Chillingworth T."/>
            <person name="Churcher C.M."/>
            <person name="Collins M."/>
            <person name="Connor R."/>
            <person name="Cronin A."/>
            <person name="Davis P."/>
            <person name="Feltwell T."/>
            <person name="Fraser A."/>
            <person name="Gentles S."/>
            <person name="Goble A."/>
            <person name="Hamlin N."/>
            <person name="Harris D.E."/>
            <person name="Hidalgo J."/>
            <person name="Hodgson G."/>
            <person name="Holroyd S."/>
            <person name="Hornsby T."/>
            <person name="Howarth S."/>
            <person name="Huckle E.J."/>
            <person name="Hunt S."/>
            <person name="Jagels K."/>
            <person name="James K.D."/>
            <person name="Jones L."/>
            <person name="Jones M."/>
            <person name="Leather S."/>
            <person name="McDonald S."/>
            <person name="McLean J."/>
            <person name="Mooney P."/>
            <person name="Moule S."/>
            <person name="Mungall K.L."/>
            <person name="Murphy L.D."/>
            <person name="Niblett D."/>
            <person name="Odell C."/>
            <person name="Oliver K."/>
            <person name="O'Neil S."/>
            <person name="Pearson D."/>
            <person name="Quail M.A."/>
            <person name="Rabbinowitsch E."/>
            <person name="Rutherford K.M."/>
            <person name="Rutter S."/>
            <person name="Saunders D."/>
            <person name="Seeger K."/>
            <person name="Sharp S."/>
            <person name="Skelton J."/>
            <person name="Simmonds M.N."/>
            <person name="Squares R."/>
            <person name="Squares S."/>
            <person name="Stevens K."/>
            <person name="Taylor K."/>
            <person name="Taylor R.G."/>
            <person name="Tivey A."/>
            <person name="Walsh S.V."/>
            <person name="Warren T."/>
            <person name="Whitehead S."/>
            <person name="Woodward J.R."/>
            <person name="Volckaert G."/>
            <person name="Aert R."/>
            <person name="Robben J."/>
            <person name="Grymonprez B."/>
            <person name="Weltjens I."/>
            <person name="Vanstreels E."/>
            <person name="Rieger M."/>
            <person name="Schaefer M."/>
            <person name="Mueller-Auer S."/>
            <person name="Gabel C."/>
            <person name="Fuchs M."/>
            <person name="Duesterhoeft A."/>
            <person name="Fritzc C."/>
            <person name="Holzer E."/>
            <person name="Moestl D."/>
            <person name="Hilbert H."/>
            <person name="Borzym K."/>
            <person name="Langer I."/>
            <person name="Beck A."/>
            <person name="Lehrach H."/>
            <person name="Reinhardt R."/>
            <person name="Pohl T.M."/>
            <person name="Eger P."/>
            <person name="Zimmermann W."/>
            <person name="Wedler H."/>
            <person name="Wambutt R."/>
            <person name="Purnelle B."/>
            <person name="Goffeau A."/>
            <person name="Cadieu E."/>
            <person name="Dreano S."/>
            <person name="Gloux S."/>
            <person name="Lelaure V."/>
            <person name="Mottier S."/>
            <person name="Galibert F."/>
            <person name="Aves S.J."/>
            <person name="Xiang Z."/>
            <person name="Hunt C."/>
            <person name="Moore K."/>
            <person name="Hurst S.M."/>
            <person name="Lucas M."/>
            <person name="Rochet M."/>
            <person name="Gaillardin C."/>
            <person name="Tallada V.A."/>
            <person name="Garzon A."/>
            <person name="Thode G."/>
            <person name="Daga R.R."/>
            <person name="Cruzado L."/>
            <person name="Jimenez J."/>
            <person name="Sanchez M."/>
            <person name="del Rey F."/>
            <person name="Benito J."/>
            <person name="Dominguez A."/>
            <person name="Revuelta J.L."/>
            <person name="Moreno S."/>
            <person name="Armstrong J."/>
            <person name="Forsburg S.L."/>
            <person name="Cerutti L."/>
            <person name="Lowe T."/>
            <person name="McCombie W.R."/>
            <person name="Paulsen I."/>
            <person name="Potashkin J."/>
            <person name="Shpakovski G.V."/>
            <person name="Ussery D."/>
            <person name="Barrell B.G."/>
            <person name="Nurse P."/>
        </authorList>
    </citation>
    <scope>NUCLEOTIDE SEQUENCE [LARGE SCALE GENOMIC DNA]</scope>
    <source>
        <strain>972 / ATCC 24843</strain>
    </source>
</reference>
<reference key="4">
    <citation type="journal article" date="1999" name="Genes Dev.">
        <title>Fission yeast condensin complex: essential roles of non-SMC subunits for condensation and Cdc2 phosphorylation of Cut3/SMC4.</title>
        <authorList>
            <person name="Sutani T."/>
            <person name="Yuasa T."/>
            <person name="Tomonaga T."/>
            <person name="Dohmae N."/>
            <person name="Takio K."/>
            <person name="Yanagida M."/>
        </authorList>
    </citation>
    <scope>IDENTIFICATION IN A CONDENSIN COMPLEX WITH CUT3; CND1; CND2 AND CND3</scope>
</reference>
<sequence length="1172" mass="134137">MKIEELIIDGFKSYAVRTVISNWDDQFNAITGLNGSGKSNILDAICFVLGITNMSTVRAQNLQDLIYKRGQAGITRASVTIVFNNRDPASSPIGFENHPQVSVTRQIIMGGTSKYLINGHRALQQNVQNLFQSVQLNINNPNFLIMQGRITKVLNMKATEILSMIEEASGTRMFEERKEKAFRTMQRKEAKVEEINTLLREEIEPRLTKLRTEKKTFLEYQHIYNDLERLSHLCTAYDYYKLSLKVEELTVQASQKHSHIAEMESSLQTSKQEVLILKEKIKKIEDERMRQMSVSSDRTLDSQLQTVNENITRISTSIELKNTALEEEHGDLQQIRGKAKELETLLRGKRKRLDEVLSVYEKRKDEHQSISKDFKSQEELISSLTTGLSTTEGHETGYSRKLHEARDTLNDFKAEKETNRLKLEGLNKQISLTKPKKAEATKRCDQLNREIDILQNHVEKLKMSLKNTNSDITGEDVLQQKLKQLAKDRGNLLNELDALKSKLAYMEFTYTDPTPNFDRSKVKGLVAQLLTLNEENYDKQTALEITAGGRLYNLIVETEKIGAQLLQKGNLKRRVTIIPLNKITSFVASAERVGAAKKISNNKAQLALELIGYDDELLPAMQYVFGSTLVCDTPESAKKVTFHPSVKLKSVTLDGDVYDPSGTLTGGSVNKSAGPLLQIQKLNSLQLKLQVVTSEYEKLETQLKDLKTQNANFHRLEQEIQLKQHELTLLIEQRETDSSFRLLSDYQQYKDDVKDLKQRLPELDRLILQSDQAIKKIERDMQEWKHNKGSKMAELEKEFNQYKHKLDEFTPILEKSENDYNGVKLECEQLEGELQNHQQSLVQGESTTSLIKTEIAELELSLVNEEHNRKKLTELIEIESAKFSGLNKEIDSLSTSMKTFESEINNGELTIQKLNHEFDRLEREKSVAITAINHLEKENDWIDGQKQHFGKQGTIFDFHSQNMRQCREQLHNLKPRFASMRKAINPKVMDMIDGVEKKEAKLRSMIKTIHRDKKKIQDTVKSIDRFKRSALEKTWREVNSSFGEIFDELLPGNSAELQPPENKEFTDGLEIHVKIGSIWKDSLAELSGGQRSLVALALIMSLLKYKPAPMYILDEIDAALDLSHTQNIGRLIKTKFKGSQFIIVSLKEGMFTNANRLFHVRFMDGSSVVQAR</sequence>
<protein>
    <recommendedName>
        <fullName>Structural maintenance of chromosomes protein 2</fullName>
    </recommendedName>
    <alternativeName>
        <fullName>Cell untimely torn protein 14</fullName>
    </alternativeName>
    <alternativeName>
        <fullName>Chromosome segregation protein cut14</fullName>
    </alternativeName>
</protein>
<feature type="chain" id="PRO_0000119012" description="Structural maintenance of chromosomes protein 2">
    <location>
        <begin position="1"/>
        <end position="1172"/>
    </location>
</feature>
<feature type="domain" description="SMC hinge">
    <location>
        <begin position="520"/>
        <end position="640"/>
    </location>
</feature>
<feature type="coiled-coil region" evidence="2">
    <location>
        <begin position="172"/>
        <end position="204"/>
    </location>
</feature>
<feature type="coiled-coil region" evidence="2">
    <location>
        <begin position="258"/>
        <end position="507"/>
    </location>
</feature>
<feature type="coiled-coil region" evidence="2">
    <location>
        <begin position="676"/>
        <end position="941"/>
    </location>
</feature>
<feature type="binding site" evidence="2">
    <location>
        <begin position="32"/>
        <end position="39"/>
    </location>
    <ligand>
        <name>ATP</name>
        <dbReference type="ChEBI" id="CHEBI:30616"/>
    </ligand>
</feature>
<feature type="sequence conflict" description="In Ref. 1; BAA06453." evidence="4" ref="1">
    <original>Q</original>
    <variation>P</variation>
    <location>
        <position position="455"/>
    </location>
</feature>
<feature type="sequence conflict" description="In Ref. 1; BAA06453." evidence="4" ref="1">
    <original>TN</original>
    <variation>PY</variation>
    <location>
        <begin position="468"/>
        <end position="469"/>
    </location>
</feature>
<feature type="sequence conflict" description="In Ref. 1; BAA06453." evidence="4" ref="1">
    <original>EDV</original>
    <variation>GDA</variation>
    <location>
        <begin position="475"/>
        <end position="477"/>
    </location>
</feature>
<feature type="sequence conflict" description="In Ref. 1; BAA06453." evidence="4" ref="1">
    <original>L</original>
    <variation>M</variation>
    <location>
        <position position="482"/>
    </location>
</feature>
<feature type="sequence conflict" description="In Ref. 1; BAA06453." evidence="4" ref="1">
    <original>L</original>
    <variation>A</variation>
    <location>
        <position position="485"/>
    </location>
</feature>
<feature type="sequence conflict" description="In Ref. 1; BAA06453." evidence="4" ref="1">
    <original>VK</original>
    <variation>GE</variation>
    <location>
        <begin position="522"/>
        <end position="523"/>
    </location>
</feature>
<feature type="sequence conflict" description="In Ref. 1; BAA06453." evidence="4" ref="1">
    <original>A</original>
    <variation>T</variation>
    <location>
        <position position="673"/>
    </location>
</feature>
<feature type="sequence conflict" description="In Ref. 1; BAA06453." evidence="4" ref="1">
    <original>Q</original>
    <variation>R</variation>
    <location>
        <position position="718"/>
    </location>
</feature>
<feature type="sequence conflict" description="In Ref. 1; BAA06453." evidence="4" ref="1">
    <original>Q</original>
    <variation>R</variation>
    <location>
        <position position="733"/>
    </location>
</feature>
<feature type="sequence conflict" description="In Ref. 1; BAA06453." evidence="4" ref="1">
    <original>F</original>
    <variation>C</variation>
    <location>
        <position position="1046"/>
    </location>
</feature>
<feature type="sequence conflict" description="In Ref. 1; BAA06453." evidence="4" ref="1">
    <original>L</original>
    <variation>H</variation>
    <location>
        <position position="1146"/>
    </location>
</feature>